<proteinExistence type="inferred from homology"/>
<accession>Q7VYG3</accession>
<evidence type="ECO:0000255" key="1">
    <source>
        <dbReference type="HAMAP-Rule" id="MF_00415"/>
    </source>
</evidence>
<dbReference type="EMBL" id="BX640415">
    <property type="protein sequence ID" value="CAE41670.1"/>
    <property type="molecule type" value="Genomic_DNA"/>
</dbReference>
<dbReference type="RefSeq" id="NP_880126.1">
    <property type="nucleotide sequence ID" value="NC_002929.2"/>
</dbReference>
<dbReference type="RefSeq" id="WP_010930326.1">
    <property type="nucleotide sequence ID" value="NZ_CP039022.1"/>
</dbReference>
<dbReference type="SMR" id="Q7VYG3"/>
<dbReference type="STRING" id="257313.BP1379"/>
<dbReference type="PaxDb" id="257313-BP1379"/>
<dbReference type="KEGG" id="bpe:BP1379"/>
<dbReference type="PATRIC" id="fig|257313.5.peg.1480"/>
<dbReference type="eggNOG" id="COG2063">
    <property type="taxonomic scope" value="Bacteria"/>
</dbReference>
<dbReference type="HOGENOM" id="CLU_069313_0_0_4"/>
<dbReference type="Proteomes" id="UP000002676">
    <property type="component" value="Chromosome"/>
</dbReference>
<dbReference type="GO" id="GO:0009427">
    <property type="term" value="C:bacterial-type flagellum basal body, distal rod, L ring"/>
    <property type="evidence" value="ECO:0007669"/>
    <property type="project" value="InterPro"/>
</dbReference>
<dbReference type="GO" id="GO:0009279">
    <property type="term" value="C:cell outer membrane"/>
    <property type="evidence" value="ECO:0007669"/>
    <property type="project" value="UniProtKB-SubCell"/>
</dbReference>
<dbReference type="GO" id="GO:0003774">
    <property type="term" value="F:cytoskeletal motor activity"/>
    <property type="evidence" value="ECO:0007669"/>
    <property type="project" value="InterPro"/>
</dbReference>
<dbReference type="GO" id="GO:0071973">
    <property type="term" value="P:bacterial-type flagellum-dependent cell motility"/>
    <property type="evidence" value="ECO:0007669"/>
    <property type="project" value="InterPro"/>
</dbReference>
<dbReference type="HAMAP" id="MF_00415">
    <property type="entry name" value="FlgH"/>
    <property type="match status" value="1"/>
</dbReference>
<dbReference type="InterPro" id="IPR000527">
    <property type="entry name" value="Flag_Lring"/>
</dbReference>
<dbReference type="NCBIfam" id="NF009340">
    <property type="entry name" value="PRK12700.1"/>
    <property type="match status" value="1"/>
</dbReference>
<dbReference type="PANTHER" id="PTHR34933">
    <property type="entry name" value="FLAGELLAR L-RING PROTEIN"/>
    <property type="match status" value="1"/>
</dbReference>
<dbReference type="PANTHER" id="PTHR34933:SF3">
    <property type="entry name" value="FLAGELLAR L-RING PROTEIN"/>
    <property type="match status" value="1"/>
</dbReference>
<dbReference type="Pfam" id="PF02107">
    <property type="entry name" value="FlgH"/>
    <property type="match status" value="1"/>
</dbReference>
<dbReference type="PRINTS" id="PR01008">
    <property type="entry name" value="FLGLRINGFLGH"/>
</dbReference>
<dbReference type="PROSITE" id="PS51257">
    <property type="entry name" value="PROKAR_LIPOPROTEIN"/>
    <property type="match status" value="1"/>
</dbReference>
<sequence>MLKTVLRLPVCAALLALAAGCAMIPPEPVVICPLTAPPPSPPQPSARPNGSIYQPSAYGNYPLFEDRRPRNVGDIVTIVLEEKTNAAKGVATNTSRDGSATLGVAAAPRFMDGIINDKLDTDISGGNTANGTGKSSANNTFTGTITTTVIGVLPNGNLQIAGEKQIAINRGSEYVRFSGVVDPRSITGSNTVSSTRVADARIEYRSKGVMDEVQTMGWLQRFFLIASPF</sequence>
<name>FLGH_BORPE</name>
<feature type="signal peptide" evidence="1">
    <location>
        <begin position="1"/>
        <end position="20"/>
    </location>
</feature>
<feature type="chain" id="PRO_0000009425" description="Flagellar L-ring protein">
    <location>
        <begin position="21"/>
        <end position="229"/>
    </location>
</feature>
<feature type="lipid moiety-binding region" description="N-palmitoyl cysteine" evidence="1">
    <location>
        <position position="21"/>
    </location>
</feature>
<feature type="lipid moiety-binding region" description="S-diacylglycerol cysteine" evidence="1">
    <location>
        <position position="21"/>
    </location>
</feature>
<gene>
    <name evidence="1" type="primary">flgH</name>
    <name type="ordered locus">BP1379</name>
</gene>
<protein>
    <recommendedName>
        <fullName evidence="1">Flagellar L-ring protein</fullName>
    </recommendedName>
    <alternativeName>
        <fullName evidence="1">Basal body L-ring protein</fullName>
    </alternativeName>
</protein>
<comment type="function">
    <text evidence="1">Assembles around the rod to form the L-ring and probably protects the motor/basal body from shearing forces during rotation.</text>
</comment>
<comment type="subunit">
    <text evidence="1">The basal body constitutes a major portion of the flagellar organelle and consists of four rings (L,P,S, and M) mounted on a central rod.</text>
</comment>
<comment type="subcellular location">
    <subcellularLocation>
        <location evidence="1">Cell outer membrane</location>
        <topology evidence="1">Lipid-anchor</topology>
    </subcellularLocation>
    <subcellularLocation>
        <location evidence="1">Bacterial flagellum basal body</location>
    </subcellularLocation>
</comment>
<comment type="similarity">
    <text evidence="1">Belongs to the FlgH family.</text>
</comment>
<organism>
    <name type="scientific">Bordetella pertussis (strain Tohama I / ATCC BAA-589 / NCTC 13251)</name>
    <dbReference type="NCBI Taxonomy" id="257313"/>
    <lineage>
        <taxon>Bacteria</taxon>
        <taxon>Pseudomonadati</taxon>
        <taxon>Pseudomonadota</taxon>
        <taxon>Betaproteobacteria</taxon>
        <taxon>Burkholderiales</taxon>
        <taxon>Alcaligenaceae</taxon>
        <taxon>Bordetella</taxon>
    </lineage>
</organism>
<keyword id="KW-0975">Bacterial flagellum</keyword>
<keyword id="KW-0998">Cell outer membrane</keyword>
<keyword id="KW-0449">Lipoprotein</keyword>
<keyword id="KW-0472">Membrane</keyword>
<keyword id="KW-0564">Palmitate</keyword>
<keyword id="KW-1185">Reference proteome</keyword>
<keyword id="KW-0732">Signal</keyword>
<reference key="1">
    <citation type="journal article" date="2003" name="Nat. Genet.">
        <title>Comparative analysis of the genome sequences of Bordetella pertussis, Bordetella parapertussis and Bordetella bronchiseptica.</title>
        <authorList>
            <person name="Parkhill J."/>
            <person name="Sebaihia M."/>
            <person name="Preston A."/>
            <person name="Murphy L.D."/>
            <person name="Thomson N.R."/>
            <person name="Harris D.E."/>
            <person name="Holden M.T.G."/>
            <person name="Churcher C.M."/>
            <person name="Bentley S.D."/>
            <person name="Mungall K.L."/>
            <person name="Cerdeno-Tarraga A.-M."/>
            <person name="Temple L."/>
            <person name="James K.D."/>
            <person name="Harris B."/>
            <person name="Quail M.A."/>
            <person name="Achtman M."/>
            <person name="Atkin R."/>
            <person name="Baker S."/>
            <person name="Basham D."/>
            <person name="Bason N."/>
            <person name="Cherevach I."/>
            <person name="Chillingworth T."/>
            <person name="Collins M."/>
            <person name="Cronin A."/>
            <person name="Davis P."/>
            <person name="Doggett J."/>
            <person name="Feltwell T."/>
            <person name="Goble A."/>
            <person name="Hamlin N."/>
            <person name="Hauser H."/>
            <person name="Holroyd S."/>
            <person name="Jagels K."/>
            <person name="Leather S."/>
            <person name="Moule S."/>
            <person name="Norberczak H."/>
            <person name="O'Neil S."/>
            <person name="Ormond D."/>
            <person name="Price C."/>
            <person name="Rabbinowitsch E."/>
            <person name="Rutter S."/>
            <person name="Sanders M."/>
            <person name="Saunders D."/>
            <person name="Seeger K."/>
            <person name="Sharp S."/>
            <person name="Simmonds M."/>
            <person name="Skelton J."/>
            <person name="Squares R."/>
            <person name="Squares S."/>
            <person name="Stevens K."/>
            <person name="Unwin L."/>
            <person name="Whitehead S."/>
            <person name="Barrell B.G."/>
            <person name="Maskell D.J."/>
        </authorList>
    </citation>
    <scope>NUCLEOTIDE SEQUENCE [LARGE SCALE GENOMIC DNA]</scope>
    <source>
        <strain>Tohama I / ATCC BAA-589 / NCTC 13251</strain>
    </source>
</reference>